<keyword id="KW-0963">Cytoplasm</keyword>
<keyword id="KW-0206">Cytoskeleton</keyword>
<keyword id="KW-0597">Phosphoprotein</keyword>
<reference key="1">
    <citation type="journal article" date="2009" name="Proc. Natl. Acad. Sci. U.S.A.">
        <title>Eukaryote-to-eukaryote gene transfer events revealed by the genome sequence of the wine yeast Saccharomyces cerevisiae EC1118.</title>
        <authorList>
            <person name="Novo M."/>
            <person name="Bigey F."/>
            <person name="Beyne E."/>
            <person name="Galeote V."/>
            <person name="Gavory F."/>
            <person name="Mallet S."/>
            <person name="Cambon B."/>
            <person name="Legras J.-L."/>
            <person name="Wincker P."/>
            <person name="Casaregola S."/>
            <person name="Dequin S."/>
        </authorList>
    </citation>
    <scope>NUCLEOTIDE SEQUENCE [LARGE SCALE GENOMIC DNA]</scope>
    <source>
        <strain>Lalvin EC1118 / Prise de mousse</strain>
    </source>
</reference>
<proteinExistence type="inferred from homology"/>
<name>AIM21_YEAS8</name>
<dbReference type="EMBL" id="FN393074">
    <property type="protein sequence ID" value="CAY80515.1"/>
    <property type="status" value="ALT_INIT"/>
    <property type="molecule type" value="Genomic_DNA"/>
</dbReference>
<dbReference type="HOGENOM" id="CLU_418608_0_0_1"/>
<dbReference type="OrthoDB" id="8332at4893"/>
<dbReference type="Proteomes" id="UP000000286">
    <property type="component" value="Chromosome IX, Scaffold EC1118_1I12"/>
</dbReference>
<dbReference type="GO" id="GO:0030479">
    <property type="term" value="C:actin cortical patch"/>
    <property type="evidence" value="ECO:0007669"/>
    <property type="project" value="UniProtKB-SubCell"/>
</dbReference>
<dbReference type="InterPro" id="IPR021582">
    <property type="entry name" value="Aim21"/>
</dbReference>
<dbReference type="Pfam" id="PF11489">
    <property type="entry name" value="Aim21"/>
    <property type="match status" value="1"/>
</dbReference>
<organism>
    <name type="scientific">Saccharomyces cerevisiae (strain Lalvin EC1118 / Prise de mousse)</name>
    <name type="common">Baker's yeast</name>
    <dbReference type="NCBI Taxonomy" id="643680"/>
    <lineage>
        <taxon>Eukaryota</taxon>
        <taxon>Fungi</taxon>
        <taxon>Dikarya</taxon>
        <taxon>Ascomycota</taxon>
        <taxon>Saccharomycotina</taxon>
        <taxon>Saccharomycetes</taxon>
        <taxon>Saccharomycetales</taxon>
        <taxon>Saccharomycetaceae</taxon>
        <taxon>Saccharomyces</taxon>
    </lineage>
</organism>
<comment type="function">
    <text evidence="1">Involved in mitochondrial migration along actin filaments.</text>
</comment>
<comment type="subunit">
    <text evidence="1">Interacts with ribosomes. Interacts with ABP1.</text>
</comment>
<comment type="subcellular location">
    <subcellularLocation>
        <location evidence="1">Cytoplasm</location>
        <location evidence="1">Cytoskeleton</location>
        <location evidence="1">Actin patch</location>
    </subcellularLocation>
    <text evidence="1">Cortical actin patches. Localizes at the shmoo tip.</text>
</comment>
<comment type="similarity">
    <text evidence="4">Belongs to the AIM21 family.</text>
</comment>
<comment type="sequence caution" evidence="4">
    <conflict type="erroneous initiation">
        <sequence resource="EMBL-CDS" id="CAY80515"/>
    </conflict>
    <text>Truncated N-terminus.</text>
</comment>
<protein>
    <recommendedName>
        <fullName>Altered inheritance of mitochondria protein 21</fullName>
    </recommendedName>
</protein>
<evidence type="ECO:0000250" key="1"/>
<evidence type="ECO:0000250" key="2">
    <source>
        <dbReference type="UniProtKB" id="P40563"/>
    </source>
</evidence>
<evidence type="ECO:0000256" key="3">
    <source>
        <dbReference type="SAM" id="MobiDB-lite"/>
    </source>
</evidence>
<evidence type="ECO:0000305" key="4"/>
<sequence length="679" mass="74793">MPSEVTPKVPERPSRRKTSELFPLSGSESGDIKANSEPPTPAGTPNVPTRRPILKAKTMTSFESGMDQESLPKVPLQRPVRRSTTEELNNVMNNTSKELEEIESLISKHNIHNVSRKKSPTSVEEGKVAAIHQNGQRSASDNKTSTNPSPLEKNEHEGAEGNESAISPSNLVNKSNNEVTEHSDSEDLTEKQKVHAALDNEAGDRSHFEEKLIPGDMKVQVDVSKDVEEGSLNALPPSGITESDDKAEKFTKHPESSLEELQKHQEQQEEKIFQNPTDEESTTSLNEKQEGKDNMEVNSQPQGPSDTETVIAATSSNVPSQIASEEENDVPVIPRSRPKKDFEAHVQKEELPNTQEKRVSEECDSTLISTEEESKIPKIPSERPKRRAPPPVPKKPSSRIAAFQEMLQKQQQQDLHNNGNSSATTASADIAKKHTDSSITSDTTKADFTSKLNGLFALPGMVNPGQLPPSLEKKLSSPDTESKLGPQDQSQAKTGPLGGTRRGRGPRGRKLPSKVASVEKIEEDDNTNKIEIFNNWNVSSSFSKEKVLIDTTPGEQAERALDEKSKSIPEEQREQSPNKMEAALCPFELDEKEKLPANAESDPLSQLPQTNTVGNRKAISEESLSPSEAIANRDQNDTTEIQEQQMEDQMEVDMERELSGGYEDVDSALHSEEASFHSL</sequence>
<accession>C8ZAQ2</accession>
<gene>
    <name type="primary">AIM21</name>
    <name type="ORF">EC1118_1I12_2080g</name>
</gene>
<feature type="chain" id="PRO_0000399527" description="Altered inheritance of mitochondria protein 21">
    <location>
        <begin position="1"/>
        <end position="679"/>
    </location>
</feature>
<feature type="region of interest" description="Disordered" evidence="3">
    <location>
        <begin position="1"/>
        <end position="85"/>
    </location>
</feature>
<feature type="region of interest" description="Disordered" evidence="3">
    <location>
        <begin position="110"/>
        <end position="522"/>
    </location>
</feature>
<feature type="region of interest" description="Interaction with SH3 domain of ABP1" evidence="1">
    <location>
        <begin position="383"/>
        <end position="396"/>
    </location>
</feature>
<feature type="region of interest" description="Disordered" evidence="3">
    <location>
        <begin position="549"/>
        <end position="580"/>
    </location>
</feature>
<feature type="region of interest" description="Disordered" evidence="3">
    <location>
        <begin position="593"/>
        <end position="679"/>
    </location>
</feature>
<feature type="compositionally biased region" description="Basic and acidic residues" evidence="3">
    <location>
        <begin position="9"/>
        <end position="19"/>
    </location>
</feature>
<feature type="compositionally biased region" description="Basic residues" evidence="3">
    <location>
        <begin position="110"/>
        <end position="119"/>
    </location>
</feature>
<feature type="compositionally biased region" description="Polar residues" evidence="3">
    <location>
        <begin position="133"/>
        <end position="149"/>
    </location>
</feature>
<feature type="compositionally biased region" description="Polar residues" evidence="3">
    <location>
        <begin position="164"/>
        <end position="178"/>
    </location>
</feature>
<feature type="compositionally biased region" description="Basic and acidic residues" evidence="3">
    <location>
        <begin position="179"/>
        <end position="213"/>
    </location>
</feature>
<feature type="compositionally biased region" description="Basic and acidic residues" evidence="3">
    <location>
        <begin position="243"/>
        <end position="272"/>
    </location>
</feature>
<feature type="compositionally biased region" description="Polar residues" evidence="3">
    <location>
        <begin position="296"/>
        <end position="323"/>
    </location>
</feature>
<feature type="compositionally biased region" description="Basic and acidic residues" evidence="3">
    <location>
        <begin position="339"/>
        <end position="361"/>
    </location>
</feature>
<feature type="compositionally biased region" description="Basic and acidic residues" evidence="3">
    <location>
        <begin position="372"/>
        <end position="383"/>
    </location>
</feature>
<feature type="compositionally biased region" description="Polar residues" evidence="3">
    <location>
        <begin position="414"/>
        <end position="427"/>
    </location>
</feature>
<feature type="compositionally biased region" description="Polar residues" evidence="3">
    <location>
        <begin position="437"/>
        <end position="452"/>
    </location>
</feature>
<feature type="compositionally biased region" description="Basic and acidic residues" evidence="3">
    <location>
        <begin position="471"/>
        <end position="482"/>
    </location>
</feature>
<feature type="compositionally biased region" description="Basic residues" evidence="3">
    <location>
        <begin position="501"/>
        <end position="512"/>
    </location>
</feature>
<feature type="compositionally biased region" description="Basic and acidic residues" evidence="3">
    <location>
        <begin position="556"/>
        <end position="576"/>
    </location>
</feature>
<feature type="compositionally biased region" description="Polar residues" evidence="3">
    <location>
        <begin position="603"/>
        <end position="614"/>
    </location>
</feature>
<feature type="compositionally biased region" description="Basic and acidic residues" evidence="3">
    <location>
        <begin position="667"/>
        <end position="679"/>
    </location>
</feature>
<feature type="modified residue" description="Phosphothreonine" evidence="2">
    <location>
        <position position="18"/>
    </location>
</feature>
<feature type="modified residue" description="Phosphoserine" evidence="2">
    <location>
        <position position="36"/>
    </location>
</feature>
<feature type="modified residue" description="Phosphothreonine" evidence="2">
    <location>
        <position position="58"/>
    </location>
</feature>
<feature type="modified residue" description="Phosphoserine" evidence="2">
    <location>
        <position position="70"/>
    </location>
</feature>
<feature type="modified residue" description="Phosphothreonine" evidence="2">
    <location>
        <position position="85"/>
    </location>
</feature>
<feature type="modified residue" description="Phosphoserine" evidence="2">
    <location>
        <position position="104"/>
    </location>
</feature>
<feature type="modified residue" description="Phosphoserine" evidence="2">
    <location>
        <position position="183"/>
    </location>
</feature>
<feature type="modified residue" description="Phosphoserine" evidence="2">
    <location>
        <position position="206"/>
    </location>
</feature>
<feature type="modified residue" description="Phosphoserine" evidence="2">
    <location>
        <position position="231"/>
    </location>
</feature>
<feature type="modified residue" description="Phosphothreonine" evidence="2">
    <location>
        <position position="277"/>
    </location>
</feature>
<feature type="modified residue" description="Phosphoserine" evidence="2">
    <location>
        <position position="284"/>
    </location>
</feature>
<feature type="modified residue" description="Phosphoserine" evidence="2">
    <location>
        <position position="324"/>
    </location>
</feature>
<feature type="modified residue" description="Phosphothreonine" evidence="2">
    <location>
        <position position="552"/>
    </location>
</feature>
<feature type="modified residue" description="Phosphoserine" evidence="2">
    <location>
        <position position="576"/>
    </location>
</feature>
<feature type="modified residue" description="Phosphoserine" evidence="2">
    <location>
        <position position="620"/>
    </location>
</feature>
<feature type="modified residue" description="Phosphoserine" evidence="2">
    <location>
        <position position="623"/>
    </location>
</feature>
<feature type="modified residue" description="Phosphoserine" evidence="2">
    <location>
        <position position="625"/>
    </location>
</feature>
<feature type="modified residue" description="Phosphoserine" evidence="2">
    <location>
        <position position="627"/>
    </location>
</feature>
<feature type="modified residue" description="Phosphoserine" evidence="2">
    <location>
        <position position="667"/>
    </location>
</feature>
<feature type="modified residue" description="Phosphoserine" evidence="2">
    <location>
        <position position="671"/>
    </location>
</feature>
<feature type="modified residue" description="Phosphoserine" evidence="2">
    <location>
        <position position="675"/>
    </location>
</feature>
<feature type="modified residue" description="Phosphoserine" evidence="2">
    <location>
        <position position="678"/>
    </location>
</feature>